<comment type="function">
    <text>Vasotocin is an antidiuretic hormone.</text>
</comment>
<comment type="subcellular location">
    <subcellularLocation>
        <location>Secreted</location>
    </subcellularLocation>
</comment>
<comment type="PTM">
    <text evidence="1">Seven disulfide bonds are present in neurophysin.</text>
</comment>
<comment type="similarity">
    <text evidence="3">Belongs to the vasopressin/oxytocin family.</text>
</comment>
<protein>
    <recommendedName>
        <fullName>Vasotocin-neurophysin VT 1</fullName>
    </recommendedName>
    <component>
        <recommendedName>
            <fullName>Vasotocin</fullName>
            <shortName>VT</shortName>
        </recommendedName>
    </component>
    <component>
        <recommendedName>
            <fullName>Neurophysin VT 1</fullName>
        </recommendedName>
    </component>
</protein>
<dbReference type="EMBL" id="X17327">
    <property type="protein sequence ID" value="CAA35205.1"/>
    <property type="molecule type" value="mRNA"/>
</dbReference>
<dbReference type="EMBL" id="D10942">
    <property type="protein sequence ID" value="BAA01736.1"/>
    <property type="molecule type" value="mRNA"/>
</dbReference>
<dbReference type="PIR" id="A34132">
    <property type="entry name" value="A34132"/>
</dbReference>
<dbReference type="SMR" id="P16041"/>
<dbReference type="GO" id="GO:0005615">
    <property type="term" value="C:extracellular space"/>
    <property type="evidence" value="ECO:0007669"/>
    <property type="project" value="TreeGrafter"/>
</dbReference>
<dbReference type="GO" id="GO:0030141">
    <property type="term" value="C:secretory granule"/>
    <property type="evidence" value="ECO:0007669"/>
    <property type="project" value="TreeGrafter"/>
</dbReference>
<dbReference type="GO" id="GO:0005185">
    <property type="term" value="F:neurohypophyseal hormone activity"/>
    <property type="evidence" value="ECO:0007669"/>
    <property type="project" value="InterPro"/>
</dbReference>
<dbReference type="FunFam" id="2.60.9.10:FF:000001">
    <property type="entry name" value="oxytocin-neurophysin 1"/>
    <property type="match status" value="1"/>
</dbReference>
<dbReference type="Gene3D" id="2.60.9.10">
    <property type="entry name" value="Neurohypophysial hormone domain"/>
    <property type="match status" value="1"/>
</dbReference>
<dbReference type="InterPro" id="IPR000981">
    <property type="entry name" value="Neurhyp_horm"/>
</dbReference>
<dbReference type="InterPro" id="IPR036387">
    <property type="entry name" value="Neurhyp_horm_dom_sf"/>
</dbReference>
<dbReference type="InterPro" id="IPR022423">
    <property type="entry name" value="Neurohypophysial_hormone_CS"/>
</dbReference>
<dbReference type="PANTHER" id="PTHR11681">
    <property type="entry name" value="NEUROPHYSIN"/>
    <property type="match status" value="1"/>
</dbReference>
<dbReference type="PANTHER" id="PTHR11681:SF13">
    <property type="entry name" value="VASOPRESSIN-NEUROPHYSIN 2-COPEPTIN PRECURSOR"/>
    <property type="match status" value="1"/>
</dbReference>
<dbReference type="Pfam" id="PF00220">
    <property type="entry name" value="Hormone_4"/>
    <property type="match status" value="1"/>
</dbReference>
<dbReference type="Pfam" id="PF00184">
    <property type="entry name" value="Hormone_5"/>
    <property type="match status" value="1"/>
</dbReference>
<dbReference type="PIRSF" id="PIRSF001815">
    <property type="entry name" value="Nonapeptide_hormone_precursor"/>
    <property type="match status" value="1"/>
</dbReference>
<dbReference type="PRINTS" id="PR00831">
    <property type="entry name" value="NEUROPHYSIN"/>
</dbReference>
<dbReference type="SMART" id="SM00003">
    <property type="entry name" value="NH"/>
    <property type="match status" value="1"/>
</dbReference>
<dbReference type="SUPFAM" id="SSF49606">
    <property type="entry name" value="Neurophysin II"/>
    <property type="match status" value="1"/>
</dbReference>
<dbReference type="PROSITE" id="PS00264">
    <property type="entry name" value="NEUROHYPOPHYS_HORM"/>
    <property type="match status" value="1"/>
</dbReference>
<proteinExistence type="evidence at transcript level"/>
<keyword id="KW-0027">Amidation</keyword>
<keyword id="KW-0165">Cleavage on pair of basic residues</keyword>
<keyword id="KW-1015">Disulfide bond</keyword>
<keyword id="KW-0372">Hormone</keyword>
<keyword id="KW-0964">Secreted</keyword>
<keyword id="KW-0732">Signal</keyword>
<accession>P16041</accession>
<accession>Q91173</accession>
<name>NEU3_ONCKE</name>
<feature type="signal peptide">
    <location>
        <begin position="1"/>
        <end position="20"/>
    </location>
</feature>
<feature type="peptide" id="PRO_0000020564" description="Vasotocin">
    <location>
        <begin position="21"/>
        <end position="29"/>
    </location>
</feature>
<feature type="chain" id="PRO_0000020565" description="Neurophysin VT 1">
    <location>
        <begin position="33"/>
        <end position="153"/>
    </location>
</feature>
<feature type="modified residue" description="Glycine amide" evidence="1">
    <location>
        <position position="29"/>
    </location>
</feature>
<feature type="disulfide bond" evidence="2">
    <location>
        <begin position="21"/>
        <end position="26"/>
    </location>
</feature>
<feature type="disulfide bond" evidence="2">
    <location>
        <begin position="41"/>
        <end position="85"/>
    </location>
</feature>
<feature type="disulfide bond" evidence="2">
    <location>
        <begin position="44"/>
        <end position="58"/>
    </location>
</feature>
<feature type="disulfide bond" evidence="2">
    <location>
        <begin position="52"/>
        <end position="75"/>
    </location>
</feature>
<feature type="disulfide bond" evidence="2">
    <location>
        <begin position="59"/>
        <end position="65"/>
    </location>
</feature>
<feature type="disulfide bond" evidence="2">
    <location>
        <begin position="92"/>
        <end position="104"/>
    </location>
</feature>
<feature type="disulfide bond" evidence="2">
    <location>
        <begin position="98"/>
        <end position="116"/>
    </location>
</feature>
<feature type="disulfide bond" evidence="2">
    <location>
        <begin position="105"/>
        <end position="110"/>
    </location>
</feature>
<feature type="sequence conflict" description="In Ref. 2; BAA01736." evidence="3" ref="2">
    <original>P</original>
    <variation>Q</variation>
    <location>
        <position position="7"/>
    </location>
</feature>
<reference key="1">
    <citation type="journal article" date="1990" name="FEBS Lett.">
        <title>Molecular cloning of two distinct vasotocin precursor cDNAs from chum salmon (Oncorhynchus keta) suggests an ancient gene duplication.</title>
        <authorList>
            <person name="Heierhorst J."/>
            <person name="Mahlmann S."/>
            <person name="Morley S.D."/>
            <person name="Coe I.R."/>
            <person name="Sherwood N.M."/>
            <person name="Richter D."/>
        </authorList>
    </citation>
    <scope>NUCLEOTIDE SEQUENCE [MRNA]</scope>
    <source>
        <tissue>Brain</tissue>
    </source>
</reference>
<reference key="2">
    <citation type="journal article" date="1991" name="J. Comp. Physiol. B">
        <title>Cloning and sequence analyses of cDNAs encoding vasotocin and isotocin precursors of chum salmon, Oncorhynchus keta: evolutionary relationships of neurohypophysial hormone precursors.</title>
        <authorList>
            <person name="Hyodo S."/>
            <person name="Kato Y."/>
            <person name="Ono M."/>
            <person name="Urano A."/>
        </authorList>
    </citation>
    <scope>NUCLEOTIDE SEQUENCE [MRNA]</scope>
    <source>
        <strain>Tsugaruishi</strain>
        <tissue>Brain</tissue>
    </source>
</reference>
<sequence>MPYSTFPLLWVLGLLALSSACYIQNCPRGGKRSFPDLPRQCMSCGPGDRGRCFGPNICCGEGMGCYMGSPEAAGCVEENYLPSPCEAGGRVCGSEGSCAASGVCCDSESCVLDPDCLEDSKRQSPSEQNAALMGGLAGDLLRILHATSRGRPQ</sequence>
<organism>
    <name type="scientific">Oncorhynchus keta</name>
    <name type="common">Chum salmon</name>
    <name type="synonym">Salmo keta</name>
    <dbReference type="NCBI Taxonomy" id="8018"/>
    <lineage>
        <taxon>Eukaryota</taxon>
        <taxon>Metazoa</taxon>
        <taxon>Chordata</taxon>
        <taxon>Craniata</taxon>
        <taxon>Vertebrata</taxon>
        <taxon>Euteleostomi</taxon>
        <taxon>Actinopterygii</taxon>
        <taxon>Neopterygii</taxon>
        <taxon>Teleostei</taxon>
        <taxon>Protacanthopterygii</taxon>
        <taxon>Salmoniformes</taxon>
        <taxon>Salmonidae</taxon>
        <taxon>Salmoninae</taxon>
        <taxon>Oncorhynchus</taxon>
    </lineage>
</organism>
<evidence type="ECO:0000250" key="1"/>
<evidence type="ECO:0000250" key="2">
    <source>
        <dbReference type="UniProtKB" id="P01175"/>
    </source>
</evidence>
<evidence type="ECO:0000305" key="3"/>